<protein>
    <recommendedName>
        <fullName>Gamma-crystallin S</fullName>
    </recommendedName>
    <alternativeName>
        <fullName>Beta-crystallin S</fullName>
    </alternativeName>
    <alternativeName>
        <fullName>Gamma-S-crystallin</fullName>
    </alternativeName>
</protein>
<proteinExistence type="evidence at protein level"/>
<reference key="1">
    <citation type="journal article" date="2004" name="Nat. Genet.">
        <title>Complete sequencing and characterization of 21,243 full-length human cDNAs.</title>
        <authorList>
            <person name="Ota T."/>
            <person name="Suzuki Y."/>
            <person name="Nishikawa T."/>
            <person name="Otsuki T."/>
            <person name="Sugiyama T."/>
            <person name="Irie R."/>
            <person name="Wakamatsu A."/>
            <person name="Hayashi K."/>
            <person name="Sato H."/>
            <person name="Nagai K."/>
            <person name="Kimura K."/>
            <person name="Makita H."/>
            <person name="Sekine M."/>
            <person name="Obayashi M."/>
            <person name="Nishi T."/>
            <person name="Shibahara T."/>
            <person name="Tanaka T."/>
            <person name="Ishii S."/>
            <person name="Yamamoto J."/>
            <person name="Saito K."/>
            <person name="Kawai Y."/>
            <person name="Isono Y."/>
            <person name="Nakamura Y."/>
            <person name="Nagahari K."/>
            <person name="Murakami K."/>
            <person name="Yasuda T."/>
            <person name="Iwayanagi T."/>
            <person name="Wagatsuma M."/>
            <person name="Shiratori A."/>
            <person name="Sudo H."/>
            <person name="Hosoiri T."/>
            <person name="Kaku Y."/>
            <person name="Kodaira H."/>
            <person name="Kondo H."/>
            <person name="Sugawara M."/>
            <person name="Takahashi M."/>
            <person name="Kanda K."/>
            <person name="Yokoi T."/>
            <person name="Furuya T."/>
            <person name="Kikkawa E."/>
            <person name="Omura Y."/>
            <person name="Abe K."/>
            <person name="Kamihara K."/>
            <person name="Katsuta N."/>
            <person name="Sato K."/>
            <person name="Tanikawa M."/>
            <person name="Yamazaki M."/>
            <person name="Ninomiya K."/>
            <person name="Ishibashi T."/>
            <person name="Yamashita H."/>
            <person name="Murakawa K."/>
            <person name="Fujimori K."/>
            <person name="Tanai H."/>
            <person name="Kimata M."/>
            <person name="Watanabe M."/>
            <person name="Hiraoka S."/>
            <person name="Chiba Y."/>
            <person name="Ishida S."/>
            <person name="Ono Y."/>
            <person name="Takiguchi S."/>
            <person name="Watanabe S."/>
            <person name="Yosida M."/>
            <person name="Hotuta T."/>
            <person name="Kusano J."/>
            <person name="Kanehori K."/>
            <person name="Takahashi-Fujii A."/>
            <person name="Hara H."/>
            <person name="Tanase T.-O."/>
            <person name="Nomura Y."/>
            <person name="Togiya S."/>
            <person name="Komai F."/>
            <person name="Hara R."/>
            <person name="Takeuchi K."/>
            <person name="Arita M."/>
            <person name="Imose N."/>
            <person name="Musashino K."/>
            <person name="Yuuki H."/>
            <person name="Oshima A."/>
            <person name="Sasaki N."/>
            <person name="Aotsuka S."/>
            <person name="Yoshikawa Y."/>
            <person name="Matsunawa H."/>
            <person name="Ichihara T."/>
            <person name="Shiohata N."/>
            <person name="Sano S."/>
            <person name="Moriya S."/>
            <person name="Momiyama H."/>
            <person name="Satoh N."/>
            <person name="Takami S."/>
            <person name="Terashima Y."/>
            <person name="Suzuki O."/>
            <person name="Nakagawa S."/>
            <person name="Senoh A."/>
            <person name="Mizoguchi H."/>
            <person name="Goto Y."/>
            <person name="Shimizu F."/>
            <person name="Wakebe H."/>
            <person name="Hishigaki H."/>
            <person name="Watanabe T."/>
            <person name="Sugiyama A."/>
            <person name="Takemoto M."/>
            <person name="Kawakami B."/>
            <person name="Yamazaki M."/>
            <person name="Watanabe K."/>
            <person name="Kumagai A."/>
            <person name="Itakura S."/>
            <person name="Fukuzumi Y."/>
            <person name="Fujimori Y."/>
            <person name="Komiyama M."/>
            <person name="Tashiro H."/>
            <person name="Tanigami A."/>
            <person name="Fujiwara T."/>
            <person name="Ono T."/>
            <person name="Yamada K."/>
            <person name="Fujii Y."/>
            <person name="Ozaki K."/>
            <person name="Hirao M."/>
            <person name="Ohmori Y."/>
            <person name="Kawabata A."/>
            <person name="Hikiji T."/>
            <person name="Kobatake N."/>
            <person name="Inagaki H."/>
            <person name="Ikema Y."/>
            <person name="Okamoto S."/>
            <person name="Okitani R."/>
            <person name="Kawakami T."/>
            <person name="Noguchi S."/>
            <person name="Itoh T."/>
            <person name="Shigeta K."/>
            <person name="Senba T."/>
            <person name="Matsumura K."/>
            <person name="Nakajima Y."/>
            <person name="Mizuno T."/>
            <person name="Morinaga M."/>
            <person name="Sasaki M."/>
            <person name="Togashi T."/>
            <person name="Oyama M."/>
            <person name="Hata H."/>
            <person name="Watanabe M."/>
            <person name="Komatsu T."/>
            <person name="Mizushima-Sugano J."/>
            <person name="Satoh T."/>
            <person name="Shirai Y."/>
            <person name="Takahashi Y."/>
            <person name="Nakagawa K."/>
            <person name="Okumura K."/>
            <person name="Nagase T."/>
            <person name="Nomura N."/>
            <person name="Kikuchi H."/>
            <person name="Masuho Y."/>
            <person name="Yamashita R."/>
            <person name="Nakai K."/>
            <person name="Yada T."/>
            <person name="Nakamura Y."/>
            <person name="Ohara O."/>
            <person name="Isogai T."/>
            <person name="Sugano S."/>
        </authorList>
    </citation>
    <scope>NUCLEOTIDE SEQUENCE [LARGE SCALE MRNA]</scope>
    <source>
        <tissue>Thymus</tissue>
    </source>
</reference>
<reference key="2">
    <citation type="journal article" date="1992" name="Biochem. J.">
        <title>Primary structure of beta s-crystallin from human lens.</title>
        <authorList>
            <person name="Zarina S."/>
            <person name="Abbasi A."/>
            <person name="Zaidi Z.H."/>
        </authorList>
    </citation>
    <scope>PRELIMINARY PROTEIN SEQUENCE OF 2-178</scope>
    <scope>CLEAVAGE OF INITIATOR METHIONINE</scope>
    <scope>ACETYLATION AT SER-2</scope>
    <source>
        <tissue>Lens</tissue>
    </source>
</reference>
<reference key="3">
    <citation type="journal article" date="2000" name="Mol. Vis.">
        <title>The human gene for gammaS-crystallin: alternative transcripts and expressed sequences from the first intron.</title>
        <authorList>
            <person name="Wistow G."/>
            <person name="Sardarian L."/>
            <person name="Gan W."/>
            <person name="Wyatt M.K."/>
        </authorList>
    </citation>
    <scope>NUCLEOTIDE SEQUENCE [GENOMIC DNA / MRNA]</scope>
</reference>
<reference key="4">
    <citation type="submission" date="2005-09" db="EMBL/GenBank/DDBJ databases">
        <authorList>
            <person name="Mural R.J."/>
            <person name="Istrail S."/>
            <person name="Sutton G.G."/>
            <person name="Florea L."/>
            <person name="Halpern A.L."/>
            <person name="Mobarry C.M."/>
            <person name="Lippert R."/>
            <person name="Walenz B."/>
            <person name="Shatkay H."/>
            <person name="Dew I."/>
            <person name="Miller J.R."/>
            <person name="Flanigan M.J."/>
            <person name="Edwards N.J."/>
            <person name="Bolanos R."/>
            <person name="Fasulo D."/>
            <person name="Halldorsson B.V."/>
            <person name="Hannenhalli S."/>
            <person name="Turner R."/>
            <person name="Yooseph S."/>
            <person name="Lu F."/>
            <person name="Nusskern D.R."/>
            <person name="Shue B.C."/>
            <person name="Zheng X.H."/>
            <person name="Zhong F."/>
            <person name="Delcher A.L."/>
            <person name="Huson D.H."/>
            <person name="Kravitz S.A."/>
            <person name="Mouchard L."/>
            <person name="Reinert K."/>
            <person name="Remington K.A."/>
            <person name="Clark A.G."/>
            <person name="Waterman M.S."/>
            <person name="Eichler E.E."/>
            <person name="Adams M.D."/>
            <person name="Hunkapiller M.W."/>
            <person name="Myers E.W."/>
            <person name="Venter J.C."/>
        </authorList>
    </citation>
    <scope>NUCLEOTIDE SEQUENCE [LARGE SCALE GENOMIC DNA]</scope>
</reference>
<reference key="5">
    <citation type="journal article" date="2004" name="Genome Res.">
        <title>The status, quality, and expansion of the NIH full-length cDNA project: the Mammalian Gene Collection (MGC).</title>
        <authorList>
            <consortium name="The MGC Project Team"/>
        </authorList>
    </citation>
    <scope>NUCLEOTIDE SEQUENCE [LARGE SCALE MRNA]</scope>
    <source>
        <tissue>Blood vessel</tissue>
    </source>
</reference>
<reference key="6">
    <citation type="journal article" date="1995" name="Biochem. J.">
        <title>The complete sequence of human lens gamma s-crystallin.</title>
        <authorList>
            <person name="Smith J.B."/>
            <person name="Yang Z."/>
            <person name="Lin P."/>
            <person name="Zaidi Z.H."/>
            <person name="Abbasi A."/>
            <person name="Russell P."/>
        </authorList>
    </citation>
    <scope>NUCLEOTIDE SEQUENCE [MRNA] OF 20-107</scope>
    <scope>SEQUENCE REVISION</scope>
    <source>
        <tissue>Lens</tissue>
    </source>
</reference>
<reference key="7">
    <citation type="journal article" date="1997" name="J. Biol. Chem.">
        <title>Sequence analysis of betaA3, betaB3, and betaA4 crystallins completes the identification of the major proteins in young human lens.</title>
        <authorList>
            <person name="Lampi K.J."/>
            <person name="Ma Z."/>
            <person name="Shih M."/>
            <person name="Shearer T.R."/>
            <person name="Smith J.B."/>
            <person name="Smith D.L."/>
            <person name="David L.L."/>
        </authorList>
    </citation>
    <scope>PROTEIN SEQUENCE OF 8-14</scope>
    <scope>MASS SPECTROMETRY</scope>
</reference>
<reference key="8">
    <citation type="journal article" date="2002" name="J. Biol. Chem.">
        <title>The X-ray crystal structure of human gamma S-crystallin C-terminal domain.</title>
        <authorList>
            <person name="Purkiss A.G."/>
            <person name="Bateman O.A."/>
            <person name="Goodfellow J.M."/>
            <person name="Lubsen N.H."/>
            <person name="Slingsby C."/>
        </authorList>
    </citation>
    <scope>X-RAY CRYSTALLOGRAPHY (2.4 ANGSTROMS) OF 92-178</scope>
</reference>
<reference key="9">
    <citation type="journal article" date="2005" name="J. Med. Genet.">
        <title>Gamma-S crystallin gene (CRYGS) mutation causes dominant progressive cortical cataract in humans.</title>
        <authorList>
            <person name="Sun H."/>
            <person name="Ma Z."/>
            <person name="Li Y."/>
            <person name="Liu B."/>
            <person name="Li Z."/>
            <person name="Ding X."/>
            <person name="Gao Y."/>
            <person name="Ma W."/>
            <person name="Tang X."/>
            <person name="Li X."/>
            <person name="Shen Y."/>
        </authorList>
    </citation>
    <scope>VARIANT CTRCT20 VAL-18</scope>
</reference>
<reference key="10">
    <citation type="journal article" date="2008" name="Mol. Vis.">
        <title>Crystallin gene mutations in Indian families with inherited pediatric cataract.</title>
        <authorList>
            <person name="Devi R.R."/>
            <person name="Yao W."/>
            <person name="Vijayalakshmi P."/>
            <person name="Sergeev Y.V."/>
            <person name="Sundaresan P."/>
            <person name="Hejtmancik J.F."/>
        </authorList>
    </citation>
    <scope>VARIANT CTRCT20 CYS-39</scope>
</reference>
<reference key="11">
    <citation type="journal article" date="2011" name="Mol. Vis.">
        <title>Mutation analysis of 12 genes in Chinese families with congenital cataracts.</title>
        <authorList>
            <person name="Sun W."/>
            <person name="Xiao X."/>
            <person name="Li S."/>
            <person name="Guo X."/>
            <person name="Zhang Q."/>
        </authorList>
    </citation>
    <scope>VARIANT CTRCT20 GLY-26</scope>
</reference>
<reference key="12">
    <citation type="journal article" date="2017" name="G3 (Bethesda)">
        <title>High-Throughput Genetic Screening of 51 Pediatric Cataract Genes Identifies Causative Mutations in Inherited Pediatric Cataract in South Eastern Australia.</title>
        <authorList>
            <person name="Javadiyan S."/>
            <person name="Craig J.E."/>
            <person name="Souzeau E."/>
            <person name="Sharma S."/>
            <person name="Lower K.M."/>
            <person name="Mackey D.A."/>
            <person name="Staffieri S.E."/>
            <person name="Elder J.E."/>
            <person name="Taranath D."/>
            <person name="Straga T."/>
            <person name="Black J."/>
            <person name="Pater J."/>
            <person name="Casey T."/>
            <person name="Hewitt A.W."/>
            <person name="Burdon K.P."/>
        </authorList>
    </citation>
    <scope>VARIANT CTRCT20 10-PHE-TYR-11 DELINS LEU-ASN</scope>
</reference>
<accession>P22914</accession>
<accession>B2RAF8</accession>
<keyword id="KW-0002">3D-structure</keyword>
<keyword id="KW-0007">Acetylation</keyword>
<keyword id="KW-0898">Cataract</keyword>
<keyword id="KW-0903">Direct protein sequencing</keyword>
<keyword id="KW-0225">Disease variant</keyword>
<keyword id="KW-0273">Eye lens protein</keyword>
<keyword id="KW-1267">Proteomics identification</keyword>
<keyword id="KW-1185">Reference proteome</keyword>
<keyword id="KW-0677">Repeat</keyword>
<gene>
    <name type="primary">CRYGS</name>
    <name type="synonym">CRYG8</name>
</gene>
<dbReference type="EMBL" id="AK314172">
    <property type="protein sequence ID" value="BAG36855.1"/>
    <property type="molecule type" value="mRNA"/>
</dbReference>
<dbReference type="EMBL" id="AF161703">
    <property type="protein sequence ID" value="AAD45901.1"/>
    <property type="molecule type" value="mRNA"/>
</dbReference>
<dbReference type="EMBL" id="AF242198">
    <property type="protein sequence ID" value="AAF72490.1"/>
    <property type="molecule type" value="Genomic_DNA"/>
</dbReference>
<dbReference type="EMBL" id="AF242197">
    <property type="protein sequence ID" value="AAF72490.1"/>
    <property type="status" value="JOINED"/>
    <property type="molecule type" value="Genomic_DNA"/>
</dbReference>
<dbReference type="EMBL" id="CH471052">
    <property type="protein sequence ID" value="EAW78195.1"/>
    <property type="molecule type" value="Genomic_DNA"/>
</dbReference>
<dbReference type="EMBL" id="BC069478">
    <property type="protein sequence ID" value="AAH69478.1"/>
    <property type="molecule type" value="mRNA"/>
</dbReference>
<dbReference type="EMBL" id="BC070241">
    <property type="protein sequence ID" value="AAH70241.1"/>
    <property type="molecule type" value="mRNA"/>
</dbReference>
<dbReference type="EMBL" id="L36869">
    <property type="protein sequence ID" value="AAA92870.1"/>
    <property type="molecule type" value="mRNA"/>
</dbReference>
<dbReference type="CCDS" id="CCDS3275.1"/>
<dbReference type="PIR" id="S29111">
    <property type="entry name" value="S29111"/>
</dbReference>
<dbReference type="PIR" id="S55269">
    <property type="entry name" value="S55269"/>
</dbReference>
<dbReference type="RefSeq" id="NP_060011.1">
    <property type="nucleotide sequence ID" value="NM_017541.4"/>
</dbReference>
<dbReference type="PDB" id="1HA4">
    <property type="method" value="X-ray"/>
    <property type="resolution" value="2.40 A"/>
    <property type="chains" value="A/B=92-178"/>
</dbReference>
<dbReference type="PDB" id="2M3T">
    <property type="method" value="NMR"/>
    <property type="chains" value="A=2-178"/>
</dbReference>
<dbReference type="PDB" id="2M3U">
    <property type="method" value="NMR"/>
    <property type="chains" value="A=2-178"/>
</dbReference>
<dbReference type="PDB" id="6FD8">
    <property type="method" value="X-ray"/>
    <property type="resolution" value="2.10 A"/>
    <property type="chains" value="A/B=1-178"/>
</dbReference>
<dbReference type="PDB" id="6IF9">
    <property type="method" value="NMR"/>
    <property type="chains" value="A=1-178"/>
</dbReference>
<dbReference type="PDB" id="7N36">
    <property type="method" value="X-ray"/>
    <property type="resolution" value="2.00 A"/>
    <property type="chains" value="A/B=2-178"/>
</dbReference>
<dbReference type="PDB" id="7N37">
    <property type="method" value="X-ray"/>
    <property type="resolution" value="1.30 A"/>
    <property type="chains" value="A=2-178"/>
</dbReference>
<dbReference type="PDB" id="7N38">
    <property type="method" value="X-ray"/>
    <property type="resolution" value="1.22 A"/>
    <property type="chains" value="A=2-178"/>
</dbReference>
<dbReference type="PDB" id="7N39">
    <property type="method" value="X-ray"/>
    <property type="resolution" value="1.56 A"/>
    <property type="chains" value="A/B=2-178"/>
</dbReference>
<dbReference type="PDB" id="7N3A">
    <property type="method" value="X-ray"/>
    <property type="resolution" value="1.50 A"/>
    <property type="chains" value="A=2-178"/>
</dbReference>
<dbReference type="PDB" id="7N3B">
    <property type="method" value="X-ray"/>
    <property type="resolution" value="2.09 A"/>
    <property type="chains" value="A/B=2-178"/>
</dbReference>
<dbReference type="PDB" id="7NJE">
    <property type="method" value="X-ray"/>
    <property type="resolution" value="3.00 A"/>
    <property type="chains" value="A/B=2-178"/>
</dbReference>
<dbReference type="PDBsum" id="1HA4"/>
<dbReference type="PDBsum" id="2M3T"/>
<dbReference type="PDBsum" id="2M3U"/>
<dbReference type="PDBsum" id="6FD8"/>
<dbReference type="PDBsum" id="6IF9"/>
<dbReference type="PDBsum" id="7N36"/>
<dbReference type="PDBsum" id="7N37"/>
<dbReference type="PDBsum" id="7N38"/>
<dbReference type="PDBsum" id="7N39"/>
<dbReference type="PDBsum" id="7N3A"/>
<dbReference type="PDBsum" id="7N3B"/>
<dbReference type="PDBsum" id="7NJE"/>
<dbReference type="BMRB" id="P22914"/>
<dbReference type="PCDDB" id="P22914"/>
<dbReference type="SASBDB" id="P22914"/>
<dbReference type="SMR" id="P22914"/>
<dbReference type="BioGRID" id="107814">
    <property type="interactions" value="12"/>
</dbReference>
<dbReference type="DIP" id="DIP-60585N"/>
<dbReference type="FunCoup" id="P22914">
    <property type="interactions" value="13"/>
</dbReference>
<dbReference type="IntAct" id="P22914">
    <property type="interactions" value="11"/>
</dbReference>
<dbReference type="STRING" id="9606.ENSP00000376287"/>
<dbReference type="iPTMnet" id="P22914"/>
<dbReference type="PhosphoSitePlus" id="P22914"/>
<dbReference type="BioMuta" id="CRYGS"/>
<dbReference type="DMDM" id="4033688"/>
<dbReference type="MassIVE" id="P22914"/>
<dbReference type="PaxDb" id="9606-ENSP00000376287"/>
<dbReference type="PeptideAtlas" id="P22914"/>
<dbReference type="ProteomicsDB" id="54050"/>
<dbReference type="Antibodypedia" id="33848">
    <property type="antibodies" value="217 antibodies from 23 providers"/>
</dbReference>
<dbReference type="DNASU" id="1427"/>
<dbReference type="Ensembl" id="ENST00000307944.6">
    <property type="protein sequence ID" value="ENSP00000312099.5"/>
    <property type="gene ID" value="ENSG00000213139.8"/>
</dbReference>
<dbReference type="Ensembl" id="ENST00000392499.6">
    <property type="protein sequence ID" value="ENSP00000376287.2"/>
    <property type="gene ID" value="ENSG00000213139.8"/>
</dbReference>
<dbReference type="GeneID" id="1427"/>
<dbReference type="KEGG" id="hsa:1427"/>
<dbReference type="MANE-Select" id="ENST00000307944.6">
    <property type="protein sequence ID" value="ENSP00000312099.5"/>
    <property type="RefSeq nucleotide sequence ID" value="NM_017541.4"/>
    <property type="RefSeq protein sequence ID" value="NP_060011.1"/>
</dbReference>
<dbReference type="UCSC" id="uc003fqe.4">
    <property type="organism name" value="human"/>
</dbReference>
<dbReference type="AGR" id="HGNC:2417"/>
<dbReference type="CTD" id="1427"/>
<dbReference type="DisGeNET" id="1427"/>
<dbReference type="GeneCards" id="CRYGS"/>
<dbReference type="HGNC" id="HGNC:2417">
    <property type="gene designation" value="CRYGS"/>
</dbReference>
<dbReference type="HPA" id="ENSG00000213139">
    <property type="expression patterns" value="Tissue enhanced (brain)"/>
</dbReference>
<dbReference type="MalaCards" id="CRYGS"/>
<dbReference type="MIM" id="116100">
    <property type="type" value="phenotype"/>
</dbReference>
<dbReference type="MIM" id="123730">
    <property type="type" value="gene"/>
</dbReference>
<dbReference type="neXtProt" id="NX_P22914"/>
<dbReference type="OpenTargets" id="ENSG00000213139"/>
<dbReference type="Orphanet" id="441452">
    <property type="disease" value="Early-onset lamellar cataract"/>
</dbReference>
<dbReference type="Orphanet" id="98985">
    <property type="disease" value="Early-onset sutural cataract"/>
</dbReference>
<dbReference type="PharmGKB" id="PA26922"/>
<dbReference type="VEuPathDB" id="HostDB:ENSG00000213139"/>
<dbReference type="eggNOG" id="ENOG502QQAM">
    <property type="taxonomic scope" value="Eukaryota"/>
</dbReference>
<dbReference type="GeneTree" id="ENSGT00940000160342"/>
<dbReference type="HOGENOM" id="CLU_081883_1_1_1"/>
<dbReference type="InParanoid" id="P22914"/>
<dbReference type="OMA" id="MEQFHIR"/>
<dbReference type="OrthoDB" id="8407241at2759"/>
<dbReference type="PAN-GO" id="P22914">
    <property type="GO annotations" value="3 GO annotations based on evolutionary models"/>
</dbReference>
<dbReference type="PhylomeDB" id="P22914"/>
<dbReference type="PathwayCommons" id="P22914"/>
<dbReference type="SignaLink" id="P22914"/>
<dbReference type="SIGNOR" id="P22914"/>
<dbReference type="BioGRID-ORCS" id="1427">
    <property type="hits" value="15 hits in 1157 CRISPR screens"/>
</dbReference>
<dbReference type="EvolutionaryTrace" id="P22914"/>
<dbReference type="GeneWiki" id="CRYGS"/>
<dbReference type="GenomeRNAi" id="1427"/>
<dbReference type="Pharos" id="P22914">
    <property type="development level" value="Tbio"/>
</dbReference>
<dbReference type="PRO" id="PR:P22914"/>
<dbReference type="Proteomes" id="UP000005640">
    <property type="component" value="Chromosome 3"/>
</dbReference>
<dbReference type="RNAct" id="P22914">
    <property type="molecule type" value="protein"/>
</dbReference>
<dbReference type="Bgee" id="ENSG00000213139">
    <property type="expression patterns" value="Expressed in anterior segment of eyeball and 113 other cell types or tissues"/>
</dbReference>
<dbReference type="ExpressionAtlas" id="P22914">
    <property type="expression patterns" value="baseline and differential"/>
</dbReference>
<dbReference type="GO" id="GO:0005212">
    <property type="term" value="F:structural constituent of eye lens"/>
    <property type="evidence" value="ECO:0000318"/>
    <property type="project" value="GO_Central"/>
</dbReference>
<dbReference type="GO" id="GO:0002088">
    <property type="term" value="P:lens development in camera-type eye"/>
    <property type="evidence" value="ECO:0000318"/>
    <property type="project" value="GO_Central"/>
</dbReference>
<dbReference type="GO" id="GO:0002009">
    <property type="term" value="P:morphogenesis of an epithelium"/>
    <property type="evidence" value="ECO:0007669"/>
    <property type="project" value="Ensembl"/>
</dbReference>
<dbReference type="GO" id="GO:0007601">
    <property type="term" value="P:visual perception"/>
    <property type="evidence" value="ECO:0000318"/>
    <property type="project" value="GO_Central"/>
</dbReference>
<dbReference type="FunFam" id="2.60.20.10:FF:000001">
    <property type="entry name" value="Crystallin gamma S"/>
    <property type="match status" value="1"/>
</dbReference>
<dbReference type="FunFam" id="2.60.20.10:FF:000003">
    <property type="entry name" value="Crystallin gamma S"/>
    <property type="match status" value="1"/>
</dbReference>
<dbReference type="Gene3D" id="2.60.20.10">
    <property type="entry name" value="Crystallins"/>
    <property type="match status" value="2"/>
</dbReference>
<dbReference type="InterPro" id="IPR050252">
    <property type="entry name" value="Beta/Gamma-Crystallin"/>
</dbReference>
<dbReference type="InterPro" id="IPR001064">
    <property type="entry name" value="Beta/gamma_crystallin"/>
</dbReference>
<dbReference type="InterPro" id="IPR011024">
    <property type="entry name" value="G_crystallin-like"/>
</dbReference>
<dbReference type="PANTHER" id="PTHR11818">
    <property type="entry name" value="BETA/GAMMA CRYSTALLIN"/>
    <property type="match status" value="1"/>
</dbReference>
<dbReference type="PANTHER" id="PTHR11818:SF6">
    <property type="entry name" value="GAMMA-CRYSTALLIN S"/>
    <property type="match status" value="1"/>
</dbReference>
<dbReference type="Pfam" id="PF00030">
    <property type="entry name" value="Crystall"/>
    <property type="match status" value="2"/>
</dbReference>
<dbReference type="PRINTS" id="PR01367">
    <property type="entry name" value="BGCRYSTALLIN"/>
</dbReference>
<dbReference type="SMART" id="SM00247">
    <property type="entry name" value="XTALbg"/>
    <property type="match status" value="2"/>
</dbReference>
<dbReference type="SUPFAM" id="SSF49695">
    <property type="entry name" value="gamma-Crystallin-like"/>
    <property type="match status" value="1"/>
</dbReference>
<dbReference type="PROSITE" id="PS50915">
    <property type="entry name" value="CRYSTALLIN_BETA_GAMMA"/>
    <property type="match status" value="4"/>
</dbReference>
<comment type="function">
    <text>Crystallins are the dominant structural components of the vertebrate eye lens.</text>
</comment>
<comment type="subunit">
    <text>Monomer.</text>
</comment>
<comment type="interaction">
    <interactant intactId="EBI-11308647">
        <id>P22914</id>
    </interactant>
    <interactant intactId="EBI-739060">
        <id>P02511</id>
        <label>CRYAB</label>
    </interactant>
    <organismsDiffer>false</organismsDiffer>
    <experiments>2</experiments>
</comment>
<comment type="domain">
    <text>Has a two-domain beta-structure, folded into four very similar Greek key motifs.</text>
</comment>
<comment type="mass spectrometry" mass="20918.0" error="0.3" method="Electrospray" evidence="7"/>
<comment type="disease" evidence="3 4 5 6">
    <disease id="DI-03776">
        <name>Cataract 20, multiple types</name>
        <acronym>CTRCT20</acronym>
        <description>An opacification of the crystalline lens of the eye that frequently results in visual impairment or blindness. Opacities vary in morphology, are often confined to a portion of the lens, and may be static or progressive. In general, the more posteriorly located and dense an opacity, the greater the impact on visual function. CTRCT20 includes progressive polymorphic anterior, posterior, or peripheral cortical.</description>
        <dbReference type="MIM" id="116100"/>
    </disease>
    <text>The disease is caused by variants affecting the gene represented in this entry.</text>
</comment>
<comment type="similarity">
    <text evidence="8">Belongs to the beta/gamma-crystallin family.</text>
</comment>
<evidence type="ECO:0000255" key="1">
    <source>
        <dbReference type="PROSITE-ProRule" id="PRU00028"/>
    </source>
</evidence>
<evidence type="ECO:0000269" key="2">
    <source>
    </source>
</evidence>
<evidence type="ECO:0000269" key="3">
    <source>
    </source>
</evidence>
<evidence type="ECO:0000269" key="4">
    <source>
    </source>
</evidence>
<evidence type="ECO:0000269" key="5">
    <source>
    </source>
</evidence>
<evidence type="ECO:0000269" key="6">
    <source>
    </source>
</evidence>
<evidence type="ECO:0000269" key="7">
    <source>
    </source>
</evidence>
<evidence type="ECO:0000305" key="8"/>
<evidence type="ECO:0007829" key="9">
    <source>
        <dbReference type="PDB" id="7N36"/>
    </source>
</evidence>
<evidence type="ECO:0007829" key="10">
    <source>
        <dbReference type="PDB" id="7N38"/>
    </source>
</evidence>
<evidence type="ECO:0007829" key="11">
    <source>
        <dbReference type="PDB" id="7N3B"/>
    </source>
</evidence>
<feature type="initiator methionine" description="Removed" evidence="2">
    <location>
        <position position="1"/>
    </location>
</feature>
<feature type="chain" id="PRO_0000057565" description="Gamma-crystallin S">
    <location>
        <begin position="2"/>
        <end position="178"/>
    </location>
</feature>
<feature type="domain" description="Beta/gamma crystallin 'Greek key' 1" evidence="1">
    <location>
        <begin position="6"/>
        <end position="44"/>
    </location>
</feature>
<feature type="domain" description="Beta/gamma crystallin 'Greek key' 2" evidence="1">
    <location>
        <begin position="45"/>
        <end position="87"/>
    </location>
</feature>
<feature type="domain" description="Beta/gamma crystallin 'Greek key' 3" evidence="1">
    <location>
        <begin position="94"/>
        <end position="134"/>
    </location>
</feature>
<feature type="domain" description="Beta/gamma crystallin 'Greek key' 4" evidence="1">
    <location>
        <begin position="135"/>
        <end position="177"/>
    </location>
</feature>
<feature type="region of interest" description="N-terminal arm">
    <location>
        <begin position="2"/>
        <end position="5"/>
    </location>
</feature>
<feature type="region of interest" description="Connecting peptide">
    <location>
        <begin position="88"/>
        <end position="93"/>
    </location>
</feature>
<feature type="modified residue" description="N-acetylserine" evidence="2">
    <location>
        <position position="2"/>
    </location>
</feature>
<feature type="sequence variant" id="VAR_084793" description="In CTRCT20; uncertain significance." evidence="6">
    <original>FY</original>
    <variation>LN</variation>
    <location>
        <begin position="10"/>
        <end position="11"/>
    </location>
</feature>
<feature type="sequence variant" id="VAR_069797" description="In CTRCT20; dbSNP:rs104893736." evidence="3">
    <original>G</original>
    <variation>V</variation>
    <location>
        <position position="18"/>
    </location>
</feature>
<feature type="sequence variant" id="VAR_084794" description="In CTRCT20; uncertain significance; dbSNP:rs143507827." evidence="5">
    <original>D</original>
    <variation>G</variation>
    <location>
        <position position="26"/>
    </location>
</feature>
<feature type="sequence variant" id="VAR_084795" description="In CTRCT20; uncertain significance; dbSNP:rs1184398243." evidence="4">
    <original>S</original>
    <variation>C</variation>
    <location>
        <position position="39"/>
    </location>
</feature>
<feature type="sequence conflict" description="In Ref. 2; AA sequence." evidence="8" ref="2">
    <original>T</original>
    <variation>A</variation>
    <location>
        <position position="4"/>
    </location>
</feature>
<feature type="sequence conflict" description="In Ref. 2; AA sequence." evidence="8" ref="2">
    <original>R</original>
    <variation>H</variation>
    <location>
        <position position="20"/>
    </location>
</feature>
<feature type="sequence conflict" description="In Ref. 2; AA sequence." evidence="8" ref="2">
    <original>C</original>
    <variation>S</variation>
    <location>
        <position position="23"/>
    </location>
</feature>
<feature type="sequence conflict" description="In Ref. 2; AA sequence." evidence="8" ref="2">
    <original>D</original>
    <variation>E</variation>
    <location>
        <position position="29"/>
    </location>
</feature>
<feature type="sequence conflict" description="In Ref. 2; AA sequence." evidence="8" ref="2">
    <original>T</original>
    <variation>M</variation>
    <location>
        <position position="32"/>
    </location>
</feature>
<feature type="sequence conflict" description="In Ref. 2; AA sequence." evidence="8" ref="2">
    <original>K</original>
    <variation>R</variation>
    <location>
        <position position="41"/>
    </location>
</feature>
<feature type="sequence conflict" description="In Ref. 2; AA sequence." evidence="8" ref="2">
    <original>R</original>
    <variation>T</variation>
    <location>
        <position position="52"/>
    </location>
</feature>
<feature type="sequence conflict" description="In Ref. 2; AA sequence." evidence="8" ref="2">
    <original>S</original>
    <variation>N</variation>
    <location>
        <position position="105"/>
    </location>
</feature>
<feature type="sequence conflict" description="In Ref. 2; AA sequence." evidence="8" ref="2">
    <original>Y</original>
    <variation>R</variation>
    <location>
        <position position="109"/>
    </location>
</feature>
<feature type="sequence conflict" description="In Ref. 2; AA sequence." evidence="8" ref="2">
    <original>D</original>
    <variation>N</variation>
    <location>
        <position position="114"/>
    </location>
</feature>
<feature type="strand" evidence="10">
    <location>
        <begin position="7"/>
        <end position="13"/>
    </location>
</feature>
<feature type="helix" evidence="10">
    <location>
        <begin position="14"/>
        <end position="16"/>
    </location>
</feature>
<feature type="strand" evidence="10">
    <location>
        <begin position="17"/>
        <end position="25"/>
    </location>
</feature>
<feature type="turn" evidence="10">
    <location>
        <begin position="31"/>
        <end position="33"/>
    </location>
</feature>
<feature type="strand" evidence="10">
    <location>
        <begin position="39"/>
        <end position="45"/>
    </location>
</feature>
<feature type="strand" evidence="10">
    <location>
        <begin position="47"/>
        <end position="52"/>
    </location>
</feature>
<feature type="turn" evidence="10">
    <location>
        <begin position="53"/>
        <end position="55"/>
    </location>
</feature>
<feature type="strand" evidence="10">
    <location>
        <begin position="56"/>
        <end position="62"/>
    </location>
</feature>
<feature type="strand" evidence="10">
    <location>
        <begin position="64"/>
        <end position="69"/>
    </location>
</feature>
<feature type="helix" evidence="10">
    <location>
        <begin position="70"/>
        <end position="73"/>
    </location>
</feature>
<feature type="strand" evidence="10">
    <location>
        <begin position="76"/>
        <end position="78"/>
    </location>
</feature>
<feature type="strand" evidence="10">
    <location>
        <begin position="82"/>
        <end position="85"/>
    </location>
</feature>
<feature type="helix" evidence="9">
    <location>
        <begin position="90"/>
        <end position="92"/>
    </location>
</feature>
<feature type="strand" evidence="10">
    <location>
        <begin position="95"/>
        <end position="102"/>
    </location>
</feature>
<feature type="strand" evidence="10">
    <location>
        <begin position="108"/>
        <end position="113"/>
    </location>
</feature>
<feature type="helix" evidence="10">
    <location>
        <begin position="118"/>
        <end position="122"/>
    </location>
</feature>
<feature type="strand" evidence="10">
    <location>
        <begin position="129"/>
        <end position="135"/>
    </location>
</feature>
<feature type="strand" evidence="10">
    <location>
        <begin position="137"/>
        <end position="142"/>
    </location>
</feature>
<feature type="helix" evidence="10">
    <location>
        <begin position="143"/>
        <end position="145"/>
    </location>
</feature>
<feature type="strand" evidence="10">
    <location>
        <begin position="149"/>
        <end position="152"/>
    </location>
</feature>
<feature type="strand" evidence="10">
    <location>
        <begin position="154"/>
        <end position="159"/>
    </location>
</feature>
<feature type="helix" evidence="10">
    <location>
        <begin position="160"/>
        <end position="163"/>
    </location>
</feature>
<feature type="strand" evidence="11">
    <location>
        <begin position="166"/>
        <end position="169"/>
    </location>
</feature>
<feature type="strand" evidence="10">
    <location>
        <begin position="172"/>
        <end position="175"/>
    </location>
</feature>
<name>CRYGS_HUMAN</name>
<organism>
    <name type="scientific">Homo sapiens</name>
    <name type="common">Human</name>
    <dbReference type="NCBI Taxonomy" id="9606"/>
    <lineage>
        <taxon>Eukaryota</taxon>
        <taxon>Metazoa</taxon>
        <taxon>Chordata</taxon>
        <taxon>Craniata</taxon>
        <taxon>Vertebrata</taxon>
        <taxon>Euteleostomi</taxon>
        <taxon>Mammalia</taxon>
        <taxon>Eutheria</taxon>
        <taxon>Euarchontoglires</taxon>
        <taxon>Primates</taxon>
        <taxon>Haplorrhini</taxon>
        <taxon>Catarrhini</taxon>
        <taxon>Hominidae</taxon>
        <taxon>Homo</taxon>
    </lineage>
</organism>
<sequence length="178" mass="21007">MSKTGTKITFYEDKNFQGRRYDCDCDCADFHTYLSRCNSIKVEGGTWAVYERPNFAGYMYILPQGEYPEYQRWMGLNDRLSSCRAVHLPSGGQYKIQIFEKGDFSGQMYETTEDCPSIMEQFHMREIHSCKVLEGVWIFYELPNYRGRQYLLDKKEYRKPIDWGAASPAVQSFRRIVE</sequence>